<dbReference type="EC" id="4.3.1.32" evidence="1"/>
<dbReference type="EMBL" id="AE004437">
    <property type="protein sequence ID" value="AAG20121.1"/>
    <property type="status" value="ALT_INIT"/>
    <property type="molecule type" value="Genomic_DNA"/>
</dbReference>
<dbReference type="PIR" id="E84344">
    <property type="entry name" value="E84344"/>
</dbReference>
<dbReference type="SMR" id="Q9HNU9"/>
<dbReference type="FunCoup" id="Q9HNU9">
    <property type="interactions" value="67"/>
</dbReference>
<dbReference type="STRING" id="64091.VNG_1937C"/>
<dbReference type="PaxDb" id="64091-VNG_1937C"/>
<dbReference type="KEGG" id="hal:VNG_1937C"/>
<dbReference type="PATRIC" id="fig|64091.14.peg.1480"/>
<dbReference type="HOGENOM" id="CLU_054174_0_0_2"/>
<dbReference type="InParanoid" id="Q9HNU9"/>
<dbReference type="UniPathway" id="UPA00072"/>
<dbReference type="Proteomes" id="UP000000554">
    <property type="component" value="Chromosome"/>
</dbReference>
<dbReference type="GO" id="GO:0051539">
    <property type="term" value="F:4 iron, 4 sulfur cluster binding"/>
    <property type="evidence" value="ECO:0007669"/>
    <property type="project" value="UniProtKB-KW"/>
</dbReference>
<dbReference type="GO" id="GO:0044689">
    <property type="term" value="F:7,8-didemethyl-8-hydroxy-5-deazariboflavin synthase activity"/>
    <property type="evidence" value="ECO:0000318"/>
    <property type="project" value="GO_Central"/>
</dbReference>
<dbReference type="GO" id="GO:0005506">
    <property type="term" value="F:iron ion binding"/>
    <property type="evidence" value="ECO:0007669"/>
    <property type="project" value="UniProtKB-UniRule"/>
</dbReference>
<dbReference type="GO" id="GO:0016765">
    <property type="term" value="F:transferase activity, transferring alkyl or aryl (other than methyl) groups"/>
    <property type="evidence" value="ECO:0007669"/>
    <property type="project" value="InterPro"/>
</dbReference>
<dbReference type="CDD" id="cd01335">
    <property type="entry name" value="Radical_SAM"/>
    <property type="match status" value="1"/>
</dbReference>
<dbReference type="Gene3D" id="3.20.20.70">
    <property type="entry name" value="Aldolase class I"/>
    <property type="match status" value="1"/>
</dbReference>
<dbReference type="HAMAP" id="MF_01611">
    <property type="entry name" value="FO_synth_sub1"/>
    <property type="match status" value="1"/>
</dbReference>
<dbReference type="InterPro" id="IPR013785">
    <property type="entry name" value="Aldolase_TIM"/>
</dbReference>
<dbReference type="InterPro" id="IPR019939">
    <property type="entry name" value="CofG_family"/>
</dbReference>
<dbReference type="InterPro" id="IPR006638">
    <property type="entry name" value="Elp3/MiaA/NifB-like_rSAM"/>
</dbReference>
<dbReference type="InterPro" id="IPR034405">
    <property type="entry name" value="F420"/>
</dbReference>
<dbReference type="InterPro" id="IPR007197">
    <property type="entry name" value="rSAM"/>
</dbReference>
<dbReference type="NCBIfam" id="TIGR03550">
    <property type="entry name" value="F420_cofG"/>
    <property type="match status" value="1"/>
</dbReference>
<dbReference type="NCBIfam" id="NF004884">
    <property type="entry name" value="PRK06245.1"/>
    <property type="match status" value="1"/>
</dbReference>
<dbReference type="PANTHER" id="PTHR43076:SF15">
    <property type="entry name" value="7,8-DIDEMETHYL-8-HYDROXY-5-DEAZARIBOFLAVIN SYNTHASE"/>
    <property type="match status" value="1"/>
</dbReference>
<dbReference type="PANTHER" id="PTHR43076">
    <property type="entry name" value="FO SYNTHASE (COFH)"/>
    <property type="match status" value="1"/>
</dbReference>
<dbReference type="Pfam" id="PF04055">
    <property type="entry name" value="Radical_SAM"/>
    <property type="match status" value="1"/>
</dbReference>
<dbReference type="SFLD" id="SFLDF00294">
    <property type="entry name" value="7_8-didemethyl-8-hydroxy-5-dea"/>
    <property type="match status" value="1"/>
</dbReference>
<dbReference type="SFLD" id="SFLDS00029">
    <property type="entry name" value="Radical_SAM"/>
    <property type="match status" value="1"/>
</dbReference>
<dbReference type="SMART" id="SM00729">
    <property type="entry name" value="Elp3"/>
    <property type="match status" value="1"/>
</dbReference>
<dbReference type="SUPFAM" id="SSF102114">
    <property type="entry name" value="Radical SAM enzymes"/>
    <property type="match status" value="1"/>
</dbReference>
<dbReference type="PROSITE" id="PS51918">
    <property type="entry name" value="RADICAL_SAM"/>
    <property type="match status" value="1"/>
</dbReference>
<comment type="function">
    <text evidence="1">Catalyzes the radical-mediated synthesis of 7,8-didemethyl-8-hydroxy-5-deazariboflavin from 5-amino-5-(4-hydroxybenzyl)-6-(D-ribitylimino)-5,6-dihydrouracil.</text>
</comment>
<comment type="catalytic activity">
    <reaction evidence="1">
        <text>5-amino-5-(4-hydroxybenzyl)-6-(D-ribitylimino)-5,6-dihydrouracil + S-adenosyl-L-methionine = 7,8-didemethyl-8-hydroxy-5-deazariboflavin + 5'-deoxyadenosine + L-methionine + NH4(+) + H(+)</text>
        <dbReference type="Rhea" id="RHEA:55204"/>
        <dbReference type="ChEBI" id="CHEBI:15378"/>
        <dbReference type="ChEBI" id="CHEBI:17319"/>
        <dbReference type="ChEBI" id="CHEBI:28938"/>
        <dbReference type="ChEBI" id="CHEBI:57844"/>
        <dbReference type="ChEBI" id="CHEBI:59789"/>
        <dbReference type="ChEBI" id="CHEBI:59904"/>
        <dbReference type="ChEBI" id="CHEBI:85936"/>
        <dbReference type="EC" id="4.3.1.32"/>
    </reaction>
</comment>
<comment type="cofactor">
    <cofactor evidence="1">
        <name>[4Fe-4S] cluster</name>
        <dbReference type="ChEBI" id="CHEBI:49883"/>
    </cofactor>
    <text evidence="1">Binds 1 [4Fe-4S] cluster. The cluster is coordinated with 3 cysteines and an exchangeable S-adenosyl-L-methionine.</text>
</comment>
<comment type="pathway">
    <text evidence="1">Cofactor biosynthesis; coenzyme F0 biosynthesis.</text>
</comment>
<comment type="subunit">
    <text evidence="1">Consists of two subunits, CofG and CofH.</text>
</comment>
<comment type="similarity">
    <text evidence="1">Belongs to the radical SAM superfamily. CofG family.</text>
</comment>
<comment type="sequence caution" evidence="3">
    <conflict type="erroneous initiation">
        <sequence resource="EMBL-CDS" id="AAG20121"/>
    </conflict>
    <text>Extended N-terminus.</text>
</comment>
<feature type="chain" id="PRO_0000147762" description="7,8-didemethyl-8-hydroxy-5-deazariboflavin synthase">
    <location>
        <begin position="1"/>
        <end position="367"/>
    </location>
</feature>
<feature type="domain" description="Radical SAM core" evidence="2">
    <location>
        <begin position="39"/>
        <end position="275"/>
    </location>
</feature>
<feature type="binding site" evidence="1">
    <location>
        <position position="53"/>
    </location>
    <ligand>
        <name>[4Fe-4S] cluster</name>
        <dbReference type="ChEBI" id="CHEBI:49883"/>
        <note>4Fe-4S-S-AdoMet</note>
    </ligand>
</feature>
<feature type="binding site" evidence="1">
    <location>
        <position position="57"/>
    </location>
    <ligand>
        <name>[4Fe-4S] cluster</name>
        <dbReference type="ChEBI" id="CHEBI:49883"/>
        <note>4Fe-4S-S-AdoMet</note>
    </ligand>
</feature>
<feature type="binding site" evidence="1">
    <location>
        <position position="60"/>
    </location>
    <ligand>
        <name>[4Fe-4S] cluster</name>
        <dbReference type="ChEBI" id="CHEBI:49883"/>
        <note>4Fe-4S-S-AdoMet</note>
    </ligand>
</feature>
<gene>
    <name evidence="1" type="primary">cofG</name>
    <name type="ordered locus">VNG_1937C</name>
</gene>
<sequence>MTETQFGGDEYDVSVSVSEAAVERALDVRPADVAPASSLTFARNVFVPLTTACRYTCTYCTYYDVPGEASLLTPEEIREQCRVGADAGCTEALFTFGDQPDDRYTAIHEQLGEWGYDSIHEYLRAACEIALEAGLLPHANPGDQTRAQMATVADVNASMGVMLETTADVQAHGGPRAKSPEQRLHTIDVAGDLGVPFTTGILVGIGEDWRDRAESLLAIRALHERHDHVQEVIVQPVRPNARWQGEPPGAETMRRVVAMARAVLPAEVGVQVPPNLTDVRGLVDCGVDDLGGVSPVTKDHINPDYAWPALDELSAIADHAGVPLRERLPVYERFLPADGGTADDGWVSQRIWRAIEDGDRYEAVRAE</sequence>
<name>COFG_HALSA</name>
<proteinExistence type="inferred from homology"/>
<accession>Q9HNU9</accession>
<evidence type="ECO:0000255" key="1">
    <source>
        <dbReference type="HAMAP-Rule" id="MF_01611"/>
    </source>
</evidence>
<evidence type="ECO:0000255" key="2">
    <source>
        <dbReference type="PROSITE-ProRule" id="PRU01266"/>
    </source>
</evidence>
<evidence type="ECO:0000305" key="3"/>
<keyword id="KW-0004">4Fe-4S</keyword>
<keyword id="KW-0408">Iron</keyword>
<keyword id="KW-0411">Iron-sulfur</keyword>
<keyword id="KW-0456">Lyase</keyword>
<keyword id="KW-0479">Metal-binding</keyword>
<keyword id="KW-1185">Reference proteome</keyword>
<keyword id="KW-0949">S-adenosyl-L-methionine</keyword>
<organism>
    <name type="scientific">Halobacterium salinarum (strain ATCC 700922 / JCM 11081 / NRC-1)</name>
    <name type="common">Halobacterium halobium</name>
    <dbReference type="NCBI Taxonomy" id="64091"/>
    <lineage>
        <taxon>Archaea</taxon>
        <taxon>Methanobacteriati</taxon>
        <taxon>Methanobacteriota</taxon>
        <taxon>Stenosarchaea group</taxon>
        <taxon>Halobacteria</taxon>
        <taxon>Halobacteriales</taxon>
        <taxon>Halobacteriaceae</taxon>
        <taxon>Halobacterium</taxon>
        <taxon>Halobacterium salinarum NRC-34001</taxon>
    </lineage>
</organism>
<protein>
    <recommendedName>
        <fullName evidence="1">7,8-didemethyl-8-hydroxy-5-deazariboflavin synthase</fullName>
        <ecNumber evidence="1">4.3.1.32</ecNumber>
    </recommendedName>
    <alternativeName>
        <fullName evidence="1">FO synthase subunit 1</fullName>
    </alternativeName>
</protein>
<reference key="1">
    <citation type="journal article" date="2000" name="Proc. Natl. Acad. Sci. U.S.A.">
        <title>Genome sequence of Halobacterium species NRC-1.</title>
        <authorList>
            <person name="Ng W.V."/>
            <person name="Kennedy S.P."/>
            <person name="Mahairas G.G."/>
            <person name="Berquist B."/>
            <person name="Pan M."/>
            <person name="Shukla H.D."/>
            <person name="Lasky S.R."/>
            <person name="Baliga N.S."/>
            <person name="Thorsson V."/>
            <person name="Sbrogna J."/>
            <person name="Swartzell S."/>
            <person name="Weir D."/>
            <person name="Hall J."/>
            <person name="Dahl T.A."/>
            <person name="Welti R."/>
            <person name="Goo Y.A."/>
            <person name="Leithauser B."/>
            <person name="Keller K."/>
            <person name="Cruz R."/>
            <person name="Danson M.J."/>
            <person name="Hough D.W."/>
            <person name="Maddocks D.G."/>
            <person name="Jablonski P.E."/>
            <person name="Krebs M.P."/>
            <person name="Angevine C.M."/>
            <person name="Dale H."/>
            <person name="Isenbarger T.A."/>
            <person name="Peck R.F."/>
            <person name="Pohlschroder M."/>
            <person name="Spudich J.L."/>
            <person name="Jung K.-H."/>
            <person name="Alam M."/>
            <person name="Freitas T."/>
            <person name="Hou S."/>
            <person name="Daniels C.J."/>
            <person name="Dennis P.P."/>
            <person name="Omer A.D."/>
            <person name="Ebhardt H."/>
            <person name="Lowe T.M."/>
            <person name="Liang P."/>
            <person name="Riley M."/>
            <person name="Hood L."/>
            <person name="DasSarma S."/>
        </authorList>
    </citation>
    <scope>NUCLEOTIDE SEQUENCE [LARGE SCALE GENOMIC DNA]</scope>
    <source>
        <strain>ATCC 700922 / JCM 11081 / NRC-1</strain>
    </source>
</reference>